<keyword id="KW-1185">Reference proteome</keyword>
<comment type="subunit">
    <text evidence="1">Interacts with SPG21.</text>
</comment>
<comment type="similarity">
    <text evidence="2">Belongs to the aldehyde dehydrogenase family.</text>
</comment>
<comment type="caution">
    <text evidence="2">The active site cysteine and glutamate residues are not conserved in this protein. Its activity is therefore unsure.</text>
</comment>
<gene>
    <name type="primary">ALDH16A1</name>
</gene>
<proteinExistence type="evidence at transcript level"/>
<name>A16A1_BOVIN</name>
<protein>
    <recommendedName>
        <fullName>Aldehyde dehydrogenase family 16 member A1</fullName>
    </recommendedName>
</protein>
<sequence length="800" mass="85168">MAATRTASRACEIFTTLEYGPAPESHACALAWLDTQDRHLGHYVNGQWLKPEHRSSVPCQDPITGENLASCLQAQSEDVAAAVEAARASLENWSTQPGAIRAQHLTRLAKVIQKHQRLLWTLESLVTGRAVREVRDRDVPLAQQLLQYHAVQAHTQEEALAGWEPMGVIGLILSPTFPFLDMMWRICPALAVGCTVVVLVPPASPTPLLLAQLAGELGPFPGILNVISGPASLGPVLAAQPGVQKVAFCGAIEEGRALRRTLAGWVPELGLALGAESLLLLTEVADVDSAVEGIVDAAWSDRSPGGLRLLIQEAVWDETMRRLQERMGRLRCGHGLDGAVDMGARGAAARDLAQRYVSEAQSQGAQVFQAGSEPSDSPFFPPTLVSDLPPASPCTQAEVPWPLVVASPFRTAKEALAVANGTPRGGSASVWSERLGQALELAYGLQVGTVWINAHGLRDPAVPTGGCKESGSSWHGGQDGLYEYLRPSGTPAWIPYLSKTLNYDAFGLALPSTLPAGPETGPAPPYGLFVGGRFQAPGARSSRPIQDSQGSLQGYVAEGGAKDIRGAVEAAHQAAPGWMSQSPAARAALLWALAAALQRREPNLVSRLERHGVELKVAKAEVELSVKRLRAWGARVQAQGCALQVAELRGPVLRLREPLGVLAIVCPDEWPLLAFVSLLAPALAHGNTVVLVPSGACPIPALEVCQEMATLLPAGLVNVVTGDRDHLTRCLALHQDIQALWYFGSAQGSQFVEWASAGNLKPVWVNRGCPRAWDQEAEGAGPELGRRAARTKALWLPMGD</sequence>
<feature type="chain" id="PRO_0000312985" description="Aldehyde dehydrogenase family 16 member A1">
    <location>
        <begin position="1"/>
        <end position="800"/>
    </location>
</feature>
<reference key="1">
    <citation type="submission" date="2007-07" db="EMBL/GenBank/DDBJ databases">
        <authorList>
            <consortium name="NIH - Mammalian Gene Collection (MGC) project"/>
        </authorList>
    </citation>
    <scope>NUCLEOTIDE SEQUENCE [LARGE SCALE MRNA]</scope>
    <source>
        <strain>Hereford</strain>
        <tissue>Ascending colon</tissue>
    </source>
</reference>
<accession>A6QR56</accession>
<organism>
    <name type="scientific">Bos taurus</name>
    <name type="common">Bovine</name>
    <dbReference type="NCBI Taxonomy" id="9913"/>
    <lineage>
        <taxon>Eukaryota</taxon>
        <taxon>Metazoa</taxon>
        <taxon>Chordata</taxon>
        <taxon>Craniata</taxon>
        <taxon>Vertebrata</taxon>
        <taxon>Euteleostomi</taxon>
        <taxon>Mammalia</taxon>
        <taxon>Eutheria</taxon>
        <taxon>Laurasiatheria</taxon>
        <taxon>Artiodactyla</taxon>
        <taxon>Ruminantia</taxon>
        <taxon>Pecora</taxon>
        <taxon>Bovidae</taxon>
        <taxon>Bovinae</taxon>
        <taxon>Bos</taxon>
    </lineage>
</organism>
<evidence type="ECO:0000250" key="1"/>
<evidence type="ECO:0000305" key="2"/>
<dbReference type="EMBL" id="BC150121">
    <property type="protein sequence ID" value="AAI50122.1"/>
    <property type="molecule type" value="mRNA"/>
</dbReference>
<dbReference type="RefSeq" id="NP_001095339.1">
    <property type="nucleotide sequence ID" value="NM_001101869.1"/>
</dbReference>
<dbReference type="SMR" id="A6QR56"/>
<dbReference type="FunCoup" id="A6QR56">
    <property type="interactions" value="746"/>
</dbReference>
<dbReference type="STRING" id="9913.ENSBTAP00000040728"/>
<dbReference type="PaxDb" id="9913-ENSBTAP00000040728"/>
<dbReference type="PeptideAtlas" id="A6QR56"/>
<dbReference type="GeneID" id="506329"/>
<dbReference type="KEGG" id="bta:506329"/>
<dbReference type="CTD" id="126133"/>
<dbReference type="eggNOG" id="KOG2450">
    <property type="taxonomic scope" value="Eukaryota"/>
</dbReference>
<dbReference type="InParanoid" id="A6QR56"/>
<dbReference type="OrthoDB" id="310895at2759"/>
<dbReference type="Proteomes" id="UP000009136">
    <property type="component" value="Unplaced"/>
</dbReference>
<dbReference type="GO" id="GO:0004029">
    <property type="term" value="F:aldehyde dehydrogenase (NAD+) activity"/>
    <property type="evidence" value="ECO:0000318"/>
    <property type="project" value="GO_Central"/>
</dbReference>
<dbReference type="CDD" id="cd07111">
    <property type="entry name" value="ALDH_F16"/>
    <property type="match status" value="1"/>
</dbReference>
<dbReference type="Gene3D" id="3.40.605.10">
    <property type="entry name" value="Aldehyde Dehydrogenase, Chain A, domain 1"/>
    <property type="match status" value="2"/>
</dbReference>
<dbReference type="Gene3D" id="3.40.309.10">
    <property type="entry name" value="Aldehyde Dehydrogenase, Chain A, domain 2"/>
    <property type="match status" value="1"/>
</dbReference>
<dbReference type="InterPro" id="IPR016161">
    <property type="entry name" value="Ald_DH/histidinol_DH"/>
</dbReference>
<dbReference type="InterPro" id="IPR016163">
    <property type="entry name" value="Ald_DH_C"/>
</dbReference>
<dbReference type="InterPro" id="IPR016162">
    <property type="entry name" value="Ald_DH_N"/>
</dbReference>
<dbReference type="InterPro" id="IPR011408">
    <property type="entry name" value="Aldehyde_DH"/>
</dbReference>
<dbReference type="InterPro" id="IPR015590">
    <property type="entry name" value="Aldehyde_DH_dom"/>
</dbReference>
<dbReference type="PANTHER" id="PTHR11699">
    <property type="entry name" value="ALDEHYDE DEHYDROGENASE-RELATED"/>
    <property type="match status" value="1"/>
</dbReference>
<dbReference type="Pfam" id="PF00171">
    <property type="entry name" value="Aldedh"/>
    <property type="match status" value="2"/>
</dbReference>
<dbReference type="PIRSF" id="PIRSF036490">
    <property type="entry name" value="Aldedh_dupl"/>
    <property type="match status" value="1"/>
</dbReference>
<dbReference type="SUPFAM" id="SSF53720">
    <property type="entry name" value="ALDH-like"/>
    <property type="match status" value="2"/>
</dbReference>